<reference key="1">
    <citation type="submission" date="2003-03" db="EMBL/GenBank/DDBJ databases">
        <title>African swine fever virus genomes.</title>
        <authorList>
            <person name="Kutish G.F."/>
            <person name="Rock D.L."/>
        </authorList>
    </citation>
    <scope>NUCLEOTIDE SEQUENCE [LARGE SCALE GENOMIC DNA]</scope>
</reference>
<comment type="function">
    <text evidence="1">Together with the penton and the other minor capsid proteins (p17, p49), forms a complicated network immediately below the outer capsid shell, stabilizing the whole capsid. In addition, blocks IFN-beta transactivation mediated by the cGAS-STING pathway and regulates the transcriptional activity of IFN-beta. Mechanistically, suppresses the phosphorylation of host key adapter protein TBK1 and degrades host IRF3 in the cytoplasm.</text>
</comment>
<comment type="subunit">
    <text evidence="1">Interacts with the minor capsid protein p17 and with the hexon capsid protein p72 capsomers; these interactions form a rigid zipper structure that stabilizes the capsomers. Interacts with host IRF3.</text>
</comment>
<comment type="subcellular location">
    <subcellularLocation>
        <location evidence="1">Virion</location>
    </subcellularLocation>
    <subcellularLocation>
        <location evidence="1">Host cytoplasm</location>
    </subcellularLocation>
</comment>
<comment type="induction">
    <text evidence="2">Expressed in the late phase of the viral replicative cycle.</text>
</comment>
<comment type="similarity">
    <text evidence="2">Belongs to the asfivirus M1249L family.</text>
</comment>
<dbReference type="EMBL" id="AY261366">
    <property type="status" value="NOT_ANNOTATED_CDS"/>
    <property type="molecule type" value="Genomic_DNA"/>
</dbReference>
<dbReference type="SMR" id="P0CAB6"/>
<dbReference type="Proteomes" id="UP000000858">
    <property type="component" value="Segment"/>
</dbReference>
<dbReference type="GO" id="GO:0030430">
    <property type="term" value="C:host cell cytoplasm"/>
    <property type="evidence" value="ECO:0007669"/>
    <property type="project" value="UniProtKB-SubCell"/>
</dbReference>
<dbReference type="GO" id="GO:0044423">
    <property type="term" value="C:virion component"/>
    <property type="evidence" value="ECO:0007669"/>
    <property type="project" value="UniProtKB-KW"/>
</dbReference>
<dbReference type="GO" id="GO:0039548">
    <property type="term" value="P:symbiont-mediated suppression of host cytoplasmic pattern recognition receptor signaling pathway via inhibition of IRF3 activity"/>
    <property type="evidence" value="ECO:0007669"/>
    <property type="project" value="UniProtKB-KW"/>
</dbReference>
<organismHost>
    <name type="scientific">Ornithodoros</name>
    <name type="common">relapsing fever ticks</name>
    <dbReference type="NCBI Taxonomy" id="6937"/>
</organismHost>
<organismHost>
    <name type="scientific">Phacochoerus aethiopicus</name>
    <name type="common">Warthog</name>
    <dbReference type="NCBI Taxonomy" id="85517"/>
</organismHost>
<organismHost>
    <name type="scientific">Phacochoerus africanus</name>
    <name type="common">Warthog</name>
    <dbReference type="NCBI Taxonomy" id="41426"/>
</organismHost>
<organismHost>
    <name type="scientific">Potamochoerus larvatus</name>
    <name type="common">Bushpig</name>
    <dbReference type="NCBI Taxonomy" id="273792"/>
</organismHost>
<organismHost>
    <name type="scientific">Sus scrofa</name>
    <name type="common">Pig</name>
    <dbReference type="NCBI Taxonomy" id="9823"/>
</organismHost>
<evidence type="ECO:0000250" key="1">
    <source>
        <dbReference type="UniProtKB" id="Q65152"/>
    </source>
</evidence>
<evidence type="ECO:0000305" key="2"/>
<accession>P0CAB6</accession>
<sequence length="1249" mass="144479">MEEVITIAQIVHRGTDILSLNNEEIEALVDEIYSTLKGSNDIKNIRLIDFLFTLKDFVNHVRAEQSKLPDLSMPMEAYIRQLLVDSDVVPIVSEKKKELRVRPSTRKEIFLINGTHLAVPAEAPIEIYGLKLRLKTFSPQCFMRMAEIGSFSPETLGYVASGANLTNFIRVFMKCVDQETWKKNGEGVVVTTKENIIQFTHQYIELYKFLRSGGHSWLINRLAEEMVHRKLDREDQGSHISNIVETEEIEPEENIKRVIFFLKELSTMYSVSPVFTSGYMPLLYDLYRAGYLEVLWNPVEQKFLQHAEQREKEQMILQQVDMKLMEVTTQARQYFKIMEEKIGRVQSDAIREILTMEGKVDDPNSILQEVIKACGKQEAELITTEYLNIKKQWELQEKNACAHLKLVKQLRSGLQYAESLKVLESIRVLYKEKNNTTNWNLCKACGFKLLCPHVDMLIQLQAAEASYDTMRTKLMKFSGINKEKENNQGLIYSYFCKICGEELAHFIQEDRTADVGVIGDLNSKLRIFIWQETMKACTFIHFGKLVDVKQFANIAVNVCLPLVYSIENIKKEEDYDPLTQLYAVIYIYAYILNLIYSSQKNKEFLTITIHGMKADSSLNAYVTFLLEKMMQQYSGIINQLSEITDQWIANNFREAFKKIIHQNGLQGLSVQDDTKVLLTEILLDPMYDYAATVARIDGSIPMHKPRTPKEAEYEFKTVIGRTPAELLSQKEFYDKIYTSKYRPDFTQLARLKDIYFQEESLRVWWGGRDEEKTSTLIYLRAYELFLKYLQNAPNFNSELAEFKTYENAYGEQKALLAQQGFYNIFDPNTGRADQRTRLFEYKRLPISTLYDERGLPHKWTIYVYKAVDSSQKPTEIEVTRKDVIKKIDNHYALADLRCSVCHVLQHEVGQLNIKKVQTALKASLEFNTFYAFYESRCPKGGLHDFQDKKCVKCGLFTYIIYDHLSQPELVHDYYNNYKDQYDKEKMSIRSIQIKKDMTMPSTETQPKPPQEPWTFDYGKIIKTAKILDISPAVIEAIGAMEGRSYADIREGQGAPPPPTSMDDPRLMAVDSAVRIFLYNYNCLRHVSTFNKPPMHVERLVKHLSYEEKEDLEKVLPNVVNEYHTTFKHLRVTDPASALLYSIEFLCISFLTLYDIKEPSWVVNIVREFALTELNTIIQSEKLLSKPGAFNFMIFGEDFVCSGEDSSMDDISAYSSPGLFGEDIIDRLDDPFSIEDVDISLDVLDNLAPQ</sequence>
<proteinExistence type="inferred from homology"/>
<gene>
    <name type="ordered locus">War-070</name>
</gene>
<protein>
    <recommendedName>
        <fullName evidence="1">Minor capsid protein M1249L</fullName>
        <shortName>pM1249L</shortName>
    </recommendedName>
</protein>
<organism>
    <name type="scientific">African swine fever virus (isolate Warthog/Namibia/Wart80/1980)</name>
    <name type="common">ASFV</name>
    <dbReference type="NCBI Taxonomy" id="561444"/>
    <lineage>
        <taxon>Viruses</taxon>
        <taxon>Varidnaviria</taxon>
        <taxon>Bamfordvirae</taxon>
        <taxon>Nucleocytoviricota</taxon>
        <taxon>Pokkesviricetes</taxon>
        <taxon>Asfuvirales</taxon>
        <taxon>Asfarviridae</taxon>
        <taxon>Asfivirus</taxon>
        <taxon>African swine fever virus</taxon>
    </lineage>
</organism>
<keyword id="KW-1035">Host cytoplasm</keyword>
<keyword id="KW-0945">Host-virus interaction</keyword>
<keyword id="KW-1090">Inhibition of host innate immune response by virus</keyword>
<keyword id="KW-1092">Inhibition of host IRF3 by virus</keyword>
<keyword id="KW-1113">Inhibition of host RLR pathway by virus</keyword>
<keyword id="KW-0426">Late protein</keyword>
<keyword id="KW-0899">Viral immunoevasion</keyword>
<keyword id="KW-0946">Virion</keyword>
<feature type="chain" id="PRO_0000373613" description="Minor capsid protein M1249L">
    <location>
        <begin position="1"/>
        <end position="1249"/>
    </location>
</feature>
<name>M1249_ASFWA</name>